<keyword id="KW-0119">Carbohydrate metabolism</keyword>
<keyword id="KW-0903">Direct protein sequencing</keyword>
<keyword id="KW-0328">Glycosyltransferase</keyword>
<keyword id="KW-0808">Transferase</keyword>
<organism>
    <name type="scientific">Thermoanaerobacter brockii</name>
    <name type="common">Thermoanaerobium brockii</name>
    <dbReference type="NCBI Taxonomy" id="29323"/>
    <lineage>
        <taxon>Bacteria</taxon>
        <taxon>Bacillati</taxon>
        <taxon>Bacillota</taxon>
        <taxon>Clostridia</taxon>
        <taxon>Thermoanaerobacterales</taxon>
        <taxon>Thermoanaerobacteraceae</taxon>
        <taxon>Thermoanaerobacter</taxon>
    </lineage>
</organism>
<sequence>MVKHMFLEDVNNLISDDKWLIFQNEYNTEVNPRYETLFTLTNGYMGVRGTFEEGSEGERSGNFIAGIFDKSDAQVREIVNAQNWLRIKLYVEGEELSLDKCQLIEFKRILDMKKGILFRSMLIKDSKDRITRIEGYRFISRSDLHRSAIKLFVTPVNYSGVVGIESIIDGTVLNSADSPKHRVKHLKVADNSSLNKSGVYLETATIDDDIRIATGSAVRLYHYEDKEKNNIAKFKRFLPLGEMSIEYFEFDGTENKTVVIDKFIITYTSRDVKKGLLKSTVEKELFAFAGEGIDKELQRHIEVYEELWSVADINIEGDEEADKALRFNIFHLMSSVNENDPMVSIAAKALHGEGYKGHVFWDTEIFMLPFFIYVHPKAAKTLLMYRYNMLDAARKNAALNGYKGAQYPWESADTGEEETPKWGFDYMGNPVRIWTGDLEHHITADIAFAVWEYFRATEDIEFMLNYGAEVIFETARFWVSRCEYVKELDRYEINNVIGPDEFHEHVDNNAYTDYLAKWNIKKGLELINMLKEKYPEHYHAISNKKCLTNEEMEKWKEVEEKIYIPYDKDKKLIEQFEGYFDKKDYVIDKFDENNMPIWPEGVDITKLGDTQLIKQADVVMLMLLLGEEFDEETKRINYEYYEKRTMHKSSLGPSMYAIMGLKVGDHKNAYQSFMRSANVDLVDNQGNTKEGLHAASAGGTWQVVVFGFGGMEIDKEGALNINSWLPEKWDKLSYKVFWKGNLIEVIVTKQEVTVKKLKGKGNIKVKVKGKELTIE</sequence>
<accession>Q8L163</accession>
<reference key="1">
    <citation type="patent" date="2000-10-31" number="US6140487">
        <title>DNA encoding kojibiose phosphorylase obtainable from thermoanaerobium, it's preparation and uses.</title>
        <authorList>
            <person name="Kubota M."/>
            <person name="Toshio M."/>
            <person name="Chaen H."/>
            <person name="Tomoyoki N."/>
        </authorList>
    </citation>
    <scope>NUCLEOTIDE SEQUENCE [GENOMIC DNA]</scope>
    <scope>FUNCTION</scope>
    <scope>CATALYTIC ACTIVITY</scope>
    <scope>BIOPHYSICOCHEMICAL PROPERTIES</scope>
    <source>
        <strain>ATCC 35047 / HTRI</strain>
    </source>
</reference>
<reference evidence="8" key="2">
    <citation type="journal article" date="2004" name="J. Biosci. Bioeng.">
        <title>Cloning and sequencing of kojibiose phosphorylase gene from Thermoanaerobacter brockii ATCC35047.</title>
        <authorList>
            <person name="Yamamoto T."/>
            <person name="Maruta K."/>
            <person name="Mukai K."/>
            <person name="Yamashita H."/>
            <person name="Nishimoto T."/>
            <person name="Kubota M."/>
            <person name="Fukuda S."/>
            <person name="Kurimoto M."/>
            <person name="Tsujisaka Y."/>
        </authorList>
    </citation>
    <scope>NUCLEOTIDE SEQUENCE [GENOMIC DNA]</scope>
    <scope>PARTIAL PROTEIN SEQUENCE</scope>
    <scope>FUNCTION</scope>
    <scope>CATALYTIC ACTIVITY</scope>
    <scope>BIOPHYSICOCHEMICAL PROPERTIES</scope>
    <scope>MUTAGENESIS OF ARG-33; ARG-48; LYS-114; ARG-137; ASP-177; ASP-271; GLU-284; ASP-340; ASP-362; LYS-403; ASP-459; ARG-476; LYS-614; GLU-642 AND LYS-749</scope>
    <source>
        <strain>ATCC 35047 / HTRI</strain>
    </source>
</reference>
<reference key="3">
    <citation type="journal article" date="1999" name="J. Appl. Glycosci.">
        <title>Purification and characterization of a novel phosphorylase, kojibiose phosphorylase, from Thermoanaerobium brockii.</title>
        <authorList>
            <person name="Chaen H."/>
            <person name="Yamamoto T."/>
            <person name="Nishimoto T."/>
            <person name="Nakada T."/>
            <person name="Fukuda S."/>
            <person name="Sugimoto T."/>
            <person name="Kurimoto M."/>
            <person name="Tsujisaka Y."/>
        </authorList>
    </citation>
    <scope>PROTEIN SEQUENCE OF 1-15</scope>
    <scope>FUNCTION</scope>
    <scope>CATALYTIC ACTIVITY</scope>
    <scope>ACTIVITY REGULATION</scope>
    <scope>BIOPHYSICOCHEMICAL PROPERTIES</scope>
    <scope>SUBUNIT</scope>
    <source>
        <strain>ATCC 35047 / HTRI</strain>
    </source>
</reference>
<comment type="function">
    <text evidence="2 3 4">Catalyzes the reversible phosphorolysis of kojibiose into beta-D-glucose 1-phosphate (Glc1P) and D-glucose (PubMed:16233673, Ref.1, Ref.3). Can act with alpha-1,2-oligoglucans, such as selaginose, but more slowly (Ref.1, Ref.3). Inactive when disaccharides with linkages other than alpha-1,2 linkages, such as sophorose, trehalose, neotrehalose, nigerose, laminaribiose, maltose, cellobiose, isomaltose, gentiobiose, sucrose and lactose, are used as substrates (Ref.1, Ref.3). In contrast, shows broad specificity for the reverse reaction (Ref.3). Various monosaccharides and disaccharides having a glucosyl residue at the non-reducing end are effective acceptors (Ref.3).</text>
</comment>
<comment type="catalytic activity">
    <reaction evidence="2 3 4">
        <text>kojibiose + phosphate = beta-D-glucose 1-phosphate + D-glucose</text>
        <dbReference type="Rhea" id="RHEA:11176"/>
        <dbReference type="ChEBI" id="CHEBI:4167"/>
        <dbReference type="ChEBI" id="CHEBI:43474"/>
        <dbReference type="ChEBI" id="CHEBI:57684"/>
        <dbReference type="ChEBI" id="CHEBI:142460"/>
        <dbReference type="EC" id="2.4.1.230"/>
    </reaction>
</comment>
<comment type="activity regulation">
    <text evidence="4">Inhibited by Hg(2+) and Pb(2+).</text>
</comment>
<comment type="biophysicochemical properties">
    <kinetics>
        <KM evidence="4">0.77 mM for kojibiose</KM>
        <KM evidence="2">0.87 mM for kojibiose</KM>
        <KM evidence="4">0.85 mM for phosphate</KM>
        <KM evidence="2">0.65 mM for phosphate</KM>
        <KM evidence="4">3.52 mM for glucose</KM>
        <KM evidence="2">3.92 mM for glucose</KM>
        <KM evidence="4">0.77 mM for beta-glucose 1-phosphate</KM>
        <KM evidence="2">0.86 mM for beta-glucose 1-phosphate</KM>
    </kinetics>
    <phDependence>
        <text evidence="2 3 4">Optimum pH is 5.5 (PubMed:16233673, Ref.1, Ref.3). Stable from pH 5.5 to 9.7 (Ref.3).</text>
    </phDependence>
    <temperatureDependence>
        <text evidence="2 3 4">Optimum temperature is about 65 degrees Celsius.</text>
    </temperatureDependence>
</comment>
<comment type="subunit">
    <text evidence="4">Homohexamer.</text>
</comment>
<comment type="similarity">
    <text evidence="7">Belongs to the glycosyl hydrolase 65 family.</text>
</comment>
<name>KOJP_THEBR</name>
<feature type="chain" id="PRO_0000108015" description="Kojibiose phosphorylase">
    <location>
        <begin position="1"/>
        <end position="775"/>
    </location>
</feature>
<feature type="active site" description="Proton donor" evidence="1">
    <location>
        <position position="501"/>
    </location>
</feature>
<feature type="binding site" evidence="1">
    <location>
        <begin position="361"/>
        <end position="362"/>
    </location>
    <ligand>
        <name>substrate</name>
    </ligand>
</feature>
<feature type="binding site" evidence="1">
    <location>
        <begin position="614"/>
        <end position="615"/>
    </location>
    <ligand>
        <name>substrate</name>
    </ligand>
</feature>
<feature type="mutagenesis site" description="Retains 30% of kojibiose phosphorylase activity." evidence="2">
    <original>R</original>
    <variation>Q</variation>
    <location>
        <position position="33"/>
    </location>
</feature>
<feature type="mutagenesis site" description="Retains 60% of kojibiose phosphorylase activity." evidence="2">
    <original>R</original>
    <variation>Q</variation>
    <location>
        <position position="48"/>
    </location>
</feature>
<feature type="mutagenesis site" description="Retains 85% of kojibiose phosphorylase activity." evidence="2">
    <original>K</original>
    <variation>Q</variation>
    <location>
        <position position="114"/>
    </location>
</feature>
<feature type="mutagenesis site" description="Retains 60% of kojibiose phosphorylase activity." evidence="2">
    <original>R</original>
    <variation>Q</variation>
    <location>
        <position position="137"/>
    </location>
</feature>
<feature type="mutagenesis site" description="No change in kojibiose phosphorylase activity." evidence="2">
    <original>D</original>
    <variation>N</variation>
    <location>
        <position position="177"/>
    </location>
</feature>
<feature type="mutagenesis site" description="Retains 70% of kojibiose phosphorylase activity." evidence="2">
    <original>D</original>
    <variation>N</variation>
    <location>
        <position position="271"/>
    </location>
</feature>
<feature type="mutagenesis site" description="No change in kojibiose phosphorylase activity." evidence="2">
    <original>E</original>
    <variation>Q</variation>
    <location>
        <position position="284"/>
    </location>
</feature>
<feature type="mutagenesis site" description="Retains 90% of kojibiose phosphorylase activity." evidence="2">
    <original>D</original>
    <variation>N</variation>
    <location>
        <position position="340"/>
    </location>
</feature>
<feature type="mutagenesis site" description="Loss of kojibiose phosphorylase activity." evidence="2">
    <original>D</original>
    <variation>N</variation>
    <location>
        <position position="362"/>
    </location>
</feature>
<feature type="mutagenesis site" description="Retains 74% of kojibiose phosphorylase activity." evidence="2">
    <original>K</original>
    <variation>Q</variation>
    <location>
        <position position="403"/>
    </location>
</feature>
<feature type="mutagenesis site" description="Strong decrease in kojibiose phosphorylase activity. Increases KM for kojibiose, beta-G1P and glucose but minimally affects the value for phosphate." evidence="2">
    <original>D</original>
    <variation>N</variation>
    <location>
        <position position="459"/>
    </location>
</feature>
<feature type="mutagenesis site" description="Retains 50% of kojibiose phosphorylase activity." evidence="2">
    <original>R</original>
    <variation>Q</variation>
    <location>
        <position position="476"/>
    </location>
</feature>
<feature type="mutagenesis site" description="Loss of kojibiose phosphorylase activity." evidence="2">
    <original>K</original>
    <variation>N</variation>
    <location>
        <position position="614"/>
    </location>
</feature>
<feature type="mutagenesis site" description="Loss of kojibiose phosphorylase activity." evidence="2">
    <original>E</original>
    <variation>Q</variation>
    <location>
        <position position="642"/>
    </location>
</feature>
<feature type="mutagenesis site" description="Retains 78% of kojibiose phosphorylase activity." evidence="2">
    <original>K</original>
    <variation>Q</variation>
    <location>
        <position position="749"/>
    </location>
</feature>
<protein>
    <recommendedName>
        <fullName evidence="6">Kojibiose phosphorylase</fullName>
        <shortName evidence="5">KP</shortName>
        <shortName evidence="6">KPase</shortName>
        <ecNumber evidence="2 3 4">2.4.1.230</ecNumber>
    </recommendedName>
</protein>
<dbReference type="EC" id="2.4.1.230" evidence="2 3 4"/>
<dbReference type="EMBL" id="AB073931">
    <property type="protein sequence ID" value="BAB97300.1"/>
    <property type="molecule type" value="Genomic_DNA"/>
</dbReference>
<dbReference type="SMR" id="Q8L163"/>
<dbReference type="CAZy" id="GH65">
    <property type="family name" value="Glycoside Hydrolase Family 65"/>
</dbReference>
<dbReference type="BioCyc" id="MetaCyc:MONOMER-18543"/>
<dbReference type="BRENDA" id="2.4.1.230">
    <property type="organism ID" value="1463"/>
</dbReference>
<dbReference type="GO" id="GO:0030246">
    <property type="term" value="F:carbohydrate binding"/>
    <property type="evidence" value="ECO:0007669"/>
    <property type="project" value="InterPro"/>
</dbReference>
<dbReference type="GO" id="GO:0004553">
    <property type="term" value="F:hydrolase activity, hydrolyzing O-glycosyl compounds"/>
    <property type="evidence" value="ECO:0007669"/>
    <property type="project" value="TreeGrafter"/>
</dbReference>
<dbReference type="GO" id="GO:0033831">
    <property type="term" value="F:kojibiose phosphorylase activity"/>
    <property type="evidence" value="ECO:0007669"/>
    <property type="project" value="UniProtKB-EC"/>
</dbReference>
<dbReference type="GO" id="GO:0005975">
    <property type="term" value="P:carbohydrate metabolic process"/>
    <property type="evidence" value="ECO:0007669"/>
    <property type="project" value="InterPro"/>
</dbReference>
<dbReference type="Gene3D" id="1.50.10.10">
    <property type="match status" value="1"/>
</dbReference>
<dbReference type="Gene3D" id="2.70.98.40">
    <property type="entry name" value="Glycoside hydrolase, family 65, N-terminal domain"/>
    <property type="match status" value="1"/>
</dbReference>
<dbReference type="Gene3D" id="2.60.420.10">
    <property type="entry name" value="Maltose phosphorylase, domain 3"/>
    <property type="match status" value="1"/>
</dbReference>
<dbReference type="InterPro" id="IPR008928">
    <property type="entry name" value="6-hairpin_glycosidase_sf"/>
</dbReference>
<dbReference type="InterPro" id="IPR012341">
    <property type="entry name" value="6hp_glycosidase-like_sf"/>
</dbReference>
<dbReference type="InterPro" id="IPR011013">
    <property type="entry name" value="Gal_mutarotase_sf_dom"/>
</dbReference>
<dbReference type="InterPro" id="IPR005194">
    <property type="entry name" value="Glyco_hydro_65_C"/>
</dbReference>
<dbReference type="InterPro" id="IPR005195">
    <property type="entry name" value="Glyco_hydro_65_M"/>
</dbReference>
<dbReference type="InterPro" id="IPR005196">
    <property type="entry name" value="Glyco_hydro_65_N"/>
</dbReference>
<dbReference type="InterPro" id="IPR037018">
    <property type="entry name" value="Glyco_hydro_65_N_sf"/>
</dbReference>
<dbReference type="InterPro" id="IPR017045">
    <property type="entry name" value="Malt_Pase/Glycosyl_Hdrlase"/>
</dbReference>
<dbReference type="PANTHER" id="PTHR11051">
    <property type="entry name" value="GLYCOSYL HYDROLASE-RELATED"/>
    <property type="match status" value="1"/>
</dbReference>
<dbReference type="PANTHER" id="PTHR11051:SF8">
    <property type="entry name" value="PROTEIN-GLUCOSYLGALACTOSYLHYDROXYLYSINE GLUCOSIDASE"/>
    <property type="match status" value="1"/>
</dbReference>
<dbReference type="Pfam" id="PF03633">
    <property type="entry name" value="Glyco_hydro_65C"/>
    <property type="match status" value="1"/>
</dbReference>
<dbReference type="Pfam" id="PF03632">
    <property type="entry name" value="Glyco_hydro_65m"/>
    <property type="match status" value="1"/>
</dbReference>
<dbReference type="Pfam" id="PF03636">
    <property type="entry name" value="Glyco_hydro_65N"/>
    <property type="match status" value="1"/>
</dbReference>
<dbReference type="PIRSF" id="PIRSF036289">
    <property type="entry name" value="Glycosyl_hydrolase_malt_phosph"/>
    <property type="match status" value="1"/>
</dbReference>
<dbReference type="SUPFAM" id="SSF74650">
    <property type="entry name" value="Galactose mutarotase-like"/>
    <property type="match status" value="1"/>
</dbReference>
<dbReference type="SUPFAM" id="SSF48208">
    <property type="entry name" value="Six-hairpin glycosidases"/>
    <property type="match status" value="1"/>
</dbReference>
<gene>
    <name evidence="5" type="primary">kojP</name>
</gene>
<evidence type="ECO:0000250" key="1">
    <source>
        <dbReference type="UniProtKB" id="D6XZ22"/>
    </source>
</evidence>
<evidence type="ECO:0000269" key="2">
    <source>
    </source>
</evidence>
<evidence type="ECO:0000269" key="3">
    <source ref="1"/>
</evidence>
<evidence type="ECO:0000269" key="4">
    <source ref="3"/>
</evidence>
<evidence type="ECO:0000303" key="5">
    <source>
    </source>
</evidence>
<evidence type="ECO:0000303" key="6">
    <source ref="3"/>
</evidence>
<evidence type="ECO:0000305" key="7"/>
<evidence type="ECO:0000312" key="8">
    <source>
        <dbReference type="EMBL" id="BAB97300.1"/>
    </source>
</evidence>
<proteinExistence type="evidence at protein level"/>